<sequence>MSHDHNHDHEERELITLVDEQGNETLFEILLTIDGKEEFGKNYVLLVPVNAEEDEDGQVEIQAYSFIENEDGTEGELQPIPEDSEDEWNMIEEVFNSFMEE</sequence>
<comment type="similarity">
    <text evidence="1">Belongs to the UPF0473 family.</text>
</comment>
<proteinExistence type="inferred from homology"/>
<organism>
    <name type="scientific">Streptococcus pneumoniae serotype 19F (strain G54)</name>
    <dbReference type="NCBI Taxonomy" id="512566"/>
    <lineage>
        <taxon>Bacteria</taxon>
        <taxon>Bacillati</taxon>
        <taxon>Bacillota</taxon>
        <taxon>Bacilli</taxon>
        <taxon>Lactobacillales</taxon>
        <taxon>Streptococcaceae</taxon>
        <taxon>Streptococcus</taxon>
    </lineage>
</organism>
<protein>
    <recommendedName>
        <fullName evidence="1">UPF0473 protein SPG_0182</fullName>
    </recommendedName>
</protein>
<reference key="1">
    <citation type="journal article" date="2001" name="Microb. Drug Resist.">
        <title>Annotated draft genomic sequence from a Streptococcus pneumoniae type 19F clinical isolate.</title>
        <authorList>
            <person name="Dopazo J."/>
            <person name="Mendoza A."/>
            <person name="Herrero J."/>
            <person name="Caldara F."/>
            <person name="Humbert Y."/>
            <person name="Friedli L."/>
            <person name="Guerrier M."/>
            <person name="Grand-Schenk E."/>
            <person name="Gandin C."/>
            <person name="de Francesco M."/>
            <person name="Polissi A."/>
            <person name="Buell G."/>
            <person name="Feger G."/>
            <person name="Garcia E."/>
            <person name="Peitsch M."/>
            <person name="Garcia-Bustos J.F."/>
        </authorList>
    </citation>
    <scope>NUCLEOTIDE SEQUENCE [LARGE SCALE GENOMIC DNA]</scope>
    <source>
        <strain>G54</strain>
    </source>
</reference>
<reference key="2">
    <citation type="submission" date="2008-03" db="EMBL/GenBank/DDBJ databases">
        <title>Pneumococcal beta glucoside metabolism investigated by whole genome comparison.</title>
        <authorList>
            <person name="Mulas L."/>
            <person name="Trappetti C."/>
            <person name="Hakenbeck R."/>
            <person name="Iannelli F."/>
            <person name="Pozzi G."/>
            <person name="Davidsen T.M."/>
            <person name="Tettelin H."/>
            <person name="Oggioni M."/>
        </authorList>
    </citation>
    <scope>NUCLEOTIDE SEQUENCE [LARGE SCALE GENOMIC DNA]</scope>
    <source>
        <strain>G54</strain>
    </source>
</reference>
<accession>B5E6E2</accession>
<dbReference type="EMBL" id="CP001015">
    <property type="protein sequence ID" value="ACF55883.1"/>
    <property type="molecule type" value="Genomic_DNA"/>
</dbReference>
<dbReference type="KEGG" id="spx:SPG_0182"/>
<dbReference type="HOGENOM" id="CLU_146610_2_1_9"/>
<dbReference type="HAMAP" id="MF_01448">
    <property type="entry name" value="UPF0473"/>
    <property type="match status" value="1"/>
</dbReference>
<dbReference type="InterPro" id="IPR009711">
    <property type="entry name" value="UPF0473"/>
</dbReference>
<dbReference type="NCBIfam" id="NF010215">
    <property type="entry name" value="PRK13678.1-2"/>
    <property type="match status" value="1"/>
</dbReference>
<dbReference type="NCBIfam" id="NF010217">
    <property type="entry name" value="PRK13678.1-4"/>
    <property type="match status" value="1"/>
</dbReference>
<dbReference type="PANTHER" id="PTHR40066">
    <property type="entry name" value="UPF0473 PROTEIN CBO2561/CLC_2432"/>
    <property type="match status" value="1"/>
</dbReference>
<dbReference type="PANTHER" id="PTHR40066:SF1">
    <property type="entry name" value="UPF0473 PROTEIN CBO2561_CLC_2432"/>
    <property type="match status" value="1"/>
</dbReference>
<dbReference type="Pfam" id="PF06949">
    <property type="entry name" value="DUF1292"/>
    <property type="match status" value="1"/>
</dbReference>
<name>Y182_STRP4</name>
<gene>
    <name type="ordered locus">SPG_0182</name>
</gene>
<evidence type="ECO:0000255" key="1">
    <source>
        <dbReference type="HAMAP-Rule" id="MF_01448"/>
    </source>
</evidence>
<feature type="chain" id="PRO_1000200984" description="UPF0473 protein SPG_0182">
    <location>
        <begin position="1"/>
        <end position="101"/>
    </location>
</feature>